<comment type="function">
    <text evidence="2">DNA-directed RNA polymerase-associated factor required for the transcription of viral early genes as well as for transcription termination. Within minutes after virus entry, recruits the core RNA polymerase, the early transcription factor (ETF) and other enzymes needed for transcription initiation, elongation, and termination thereby allowing synthesis of early mRNAs which are extruded through pores in the core particle. Recruits the multifunctional OPG102 protein, with poly(A) polymerase-stimulatory, cap nucleoside-2'-O-methyltransferase, and transcription elongation activities. Interacts with nucleoside triphosphatase I/OPG123, a DNA-dependent ATPase required for the termination of early transcripts. Acts as a transcription termination factor by binding, together with the capping enzyme/VTF, to the termination motif 5'-UUUUUNU-3' in the nascent mRNA. Involved as well in the packaging of RNA polymerase and other components needed for early transcription in assembling virus particles.</text>
</comment>
<comment type="subunit">
    <text evidence="2">Part of the early transcription complex composed of ETF, RAP94/OPG109, and the DNA-directed RNA polymerase. Interacts (via N-terminus) with nucleoside triphosphatase I/OPG123. Interacts with OPG102. Interacts with ETF heterodimer.</text>
</comment>
<comment type="subcellular location">
    <subcellularLocation>
        <location evidence="2">Virion</location>
    </subcellularLocation>
    <text evidence="2">All the enzymes and other proteins required to synthesize early mRNAs are packaged within the virion core along with the DNA genome.</text>
</comment>
<comment type="induction">
    <text>Expressed in the late phase of the viral replicative cycle.</text>
</comment>
<comment type="domain">
    <text evidence="2">Interacts with ETF via its N-terminus and with DNA-directed RNA polymerase via its C-terminus.</text>
</comment>
<comment type="similarity">
    <text evidence="3">Belongs to the poxviridae protein RAP94 family.</text>
</comment>
<feature type="chain" id="PRO_0000448134" description="RNA polymerase-associated transcription-specificity factor RAP94">
    <location>
        <begin position="1"/>
        <end position="795"/>
    </location>
</feature>
<feature type="region of interest" description="Interaction with NPH-I; required for transcription termination" evidence="1">
    <location>
        <begin position="1"/>
        <end position="196"/>
    </location>
</feature>
<feature type="region of interest" description="Interaction with J3" evidence="1">
    <location>
        <begin position="235"/>
        <end position="256"/>
    </location>
</feature>
<name>RAP94_VARV</name>
<keyword id="KW-0426">Late protein</keyword>
<keyword id="KW-0804">Transcription</keyword>
<keyword id="KW-0805">Transcription regulation</keyword>
<keyword id="KW-0806">Transcription termination</keyword>
<keyword id="KW-0946">Virion</keyword>
<evidence type="ECO:0000250" key="1"/>
<evidence type="ECO:0000250" key="2">
    <source>
        <dbReference type="UniProtKB" id="P68438"/>
    </source>
</evidence>
<evidence type="ECO:0000305" key="3"/>
<accession>P0DSR4</accession>
<accession>P33067</accession>
<organism>
    <name type="scientific">Variola virus</name>
    <dbReference type="NCBI Taxonomy" id="10255"/>
    <lineage>
        <taxon>Viruses</taxon>
        <taxon>Varidnaviria</taxon>
        <taxon>Bamfordvirae</taxon>
        <taxon>Nucleocytoviricota</taxon>
        <taxon>Pokkesviricetes</taxon>
        <taxon>Chitovirales</taxon>
        <taxon>Poxviridae</taxon>
        <taxon>Chordopoxvirinae</taxon>
        <taxon>Orthopoxvirus</taxon>
    </lineage>
</organism>
<organismHost>
    <name type="scientific">Homo sapiens</name>
    <name type="common">Human</name>
    <dbReference type="NCBI Taxonomy" id="9606"/>
</organismHost>
<proteinExistence type="evidence at transcript level"/>
<reference key="1">
    <citation type="journal article" date="1993" name="Nature">
        <title>Potential virulence determinants in terminal regions of variola smallpox virus genome.</title>
        <authorList>
            <person name="Massung R.F."/>
            <person name="Esposito J.J."/>
            <person name="Liu L.I."/>
            <person name="Qi J."/>
            <person name="Utterback T.R."/>
            <person name="Knight J.C."/>
            <person name="Aubin L."/>
            <person name="Yuran T.E."/>
            <person name="Parsons J.M."/>
            <person name="Loparev V.N."/>
            <person name="Selivanov N.A."/>
            <person name="Cavallaro K.F."/>
            <person name="Kerlavage A.R."/>
            <person name="Mahy B.W.J."/>
            <person name="Venter J.C."/>
        </authorList>
    </citation>
    <scope>NUCLEOTIDE SEQUENCE [GENOMIC DNA]</scope>
    <source>
        <strain>Bangladesh-1975</strain>
    </source>
</reference>
<sequence>MDSKETILIEIIPKIKAYLLDANISPKSYDDFISRNKNIFVINLYNVSAITEEDIRLLYTTIEQNIDANDQTLVAIFSYIGYKFEQTVKEEISTSLSLNDKNTTDEMTYNLYDLFFNTLDMYLRQKKISILVNDDVRGDVIVSYKNSDLVSSFNAELEPEIKKIPFNMKNLLPYLEKNLDQLRFSKKYLDFAYLCRHIGIPISKKKYNVRYVFLYKIDGLSIPIIIKDFLDVKYVYLENTGKIYKNSFSEDHNNSLSDWGKVIIPLLKDRHLYSYIFLSSYHLHSYYTDLIAKDEPVFIKRKKLDIIEIDEPEAWKRDVKVEFAPCEHQIRLKEAMKVDANYFTKINNFANEFIYYEDGVAYCRVCGINIPIFNLDAADVIKNTVIVSTFNKTIFLSEPYSYFVHSQRFIFNIIMSFDNIMKSQTWVMKYNINRLILNFFIDINSRRQEYEKKFSSEIKRGLFFLRLSANLFESQVSSTELFYVSKMLNLNYIVALVIILNSSADFIVSYMKSKNKTVEESTLKYAISVVIYDFLVKTRICEKGSLDTIVLFTDVYTSIMPEELDLHFQRITLELRKLVSIQRSALEPNYDVESRGEELPLSTLKFFDTSTIIVKTMAPVHTYVEQKIVAPTPSVEPTDASLKQFKELTCDEDIKILIRVHDTNATKLVIFPSHLKIEIERKKLIIPLKSLYITNTLKYYYSNSYLYIFRFGDPMPFEEELIDHEHAQYKINCYNILRYHLLPDSDVFVYFSNSLNREALEYAFYIFLSKYVNVKQWIDENITRIRELYMINFNN</sequence>
<protein>
    <recommendedName>
        <fullName>RNA polymerase-associated transcription-specificity factor RAP94</fullName>
    </recommendedName>
    <alternativeName>
        <fullName>Protein H4</fullName>
    </alternativeName>
    <alternativeName>
        <fullName>RPO-associated protein of 94 kDa</fullName>
    </alternativeName>
</protein>
<dbReference type="EMBL" id="L22579">
    <property type="protein sequence ID" value="AAA60835.1"/>
    <property type="molecule type" value="Genomic_DNA"/>
</dbReference>
<dbReference type="PIR" id="T28525">
    <property type="entry name" value="T28525"/>
</dbReference>
<dbReference type="SMR" id="P0DSR4"/>
<dbReference type="KEGG" id="vg:1486442"/>
<dbReference type="Proteomes" id="UP000119805">
    <property type="component" value="Segment"/>
</dbReference>
<dbReference type="GO" id="GO:0044423">
    <property type="term" value="C:virion component"/>
    <property type="evidence" value="ECO:0007669"/>
    <property type="project" value="UniProtKB-KW"/>
</dbReference>
<dbReference type="GO" id="GO:0003700">
    <property type="term" value="F:DNA-binding transcription factor activity"/>
    <property type="evidence" value="ECO:0007669"/>
    <property type="project" value="InterPro"/>
</dbReference>
<dbReference type="GO" id="GO:0006353">
    <property type="term" value="P:DNA-templated transcription termination"/>
    <property type="evidence" value="ECO:0007669"/>
    <property type="project" value="UniProtKB-KW"/>
</dbReference>
<dbReference type="InterPro" id="IPR004974">
    <property type="entry name" value="Pox_Rap94"/>
</dbReference>
<dbReference type="Pfam" id="PF03294">
    <property type="entry name" value="Pox_Rap94"/>
    <property type="match status" value="1"/>
</dbReference>
<gene>
    <name type="primary">OPG109</name>
    <name type="synonym">RAP94</name>
    <name type="ORF">H4L</name>
</gene>